<name>CMOB_HISS1</name>
<reference key="1">
    <citation type="journal article" date="2007" name="J. Bacteriol.">
        <title>Complete genome sequence of Haemophilus somnus (Histophilus somni) strain 129Pt and comparison to Haemophilus ducreyi 35000HP and Haemophilus influenzae Rd.</title>
        <authorList>
            <person name="Challacombe J.F."/>
            <person name="Duncan A.J."/>
            <person name="Brettin T.S."/>
            <person name="Bruce D."/>
            <person name="Chertkov O."/>
            <person name="Detter J.C."/>
            <person name="Han C.S."/>
            <person name="Misra M."/>
            <person name="Richardson P."/>
            <person name="Tapia R."/>
            <person name="Thayer N."/>
            <person name="Xie G."/>
            <person name="Inzana T.J."/>
        </authorList>
    </citation>
    <scope>NUCLEOTIDE SEQUENCE [LARGE SCALE GENOMIC DNA]</scope>
    <source>
        <strain>129Pt</strain>
    </source>
</reference>
<sequence>MFDFRPFYQQIATSTLSAWLETLPLQLKQWEKQTHGDYIKWSKIIDFLPHLTADHIDLKSAVKAETKTPLSSGERQRIIHHLKQLMPWRKGPYHLYGIHIDCEWRSDFKWERVLPHLAPLQNRLVLDVGCGSGYHMWRMVGEGAKMVVGIDPTELFLCQFEAVRKLLNNDRRANLIPLGIEEMQPLAAFDTVFSMGVLYHRKSPLDHLTQLKNQLVKDGELVLETLVVEGDINTTLVPTDRYAKMKNVYFIPSVLALINWLEKCGFHNIRCVDVETTGLEEQRKTDWLENESLIDFLNPQDHSKTIEGYPAPKRAVILANK</sequence>
<accession>Q0I1M1</accession>
<evidence type="ECO:0000255" key="1">
    <source>
        <dbReference type="HAMAP-Rule" id="MF_01590"/>
    </source>
</evidence>
<comment type="function">
    <text evidence="1">Catalyzes carboxymethyl transfer from carboxy-S-adenosyl-L-methionine (Cx-SAM) to 5-hydroxyuridine (ho5U) to form 5-carboxymethoxyuridine (cmo5U) at position 34 in tRNAs.</text>
</comment>
<comment type="catalytic activity">
    <reaction evidence="1">
        <text>carboxy-S-adenosyl-L-methionine + 5-hydroxyuridine(34) in tRNA = 5-carboxymethoxyuridine(34) in tRNA + S-adenosyl-L-homocysteine + H(+)</text>
        <dbReference type="Rhea" id="RHEA:52848"/>
        <dbReference type="Rhea" id="RHEA-COMP:13381"/>
        <dbReference type="Rhea" id="RHEA-COMP:13383"/>
        <dbReference type="ChEBI" id="CHEBI:15378"/>
        <dbReference type="ChEBI" id="CHEBI:57856"/>
        <dbReference type="ChEBI" id="CHEBI:134278"/>
        <dbReference type="ChEBI" id="CHEBI:136877"/>
        <dbReference type="ChEBI" id="CHEBI:136879"/>
    </reaction>
</comment>
<comment type="subunit">
    <text evidence="1">Homotetramer.</text>
</comment>
<comment type="similarity">
    <text evidence="1">Belongs to the class I-like SAM-binding methyltransferase superfamily. CmoB family.</text>
</comment>
<protein>
    <recommendedName>
        <fullName evidence="1">tRNA U34 carboxymethyltransferase</fullName>
        <ecNumber evidence="1">2.5.1.-</ecNumber>
    </recommendedName>
</protein>
<feature type="chain" id="PRO_0000313925" description="tRNA U34 carboxymethyltransferase">
    <location>
        <begin position="1"/>
        <end position="321"/>
    </location>
</feature>
<feature type="binding site" evidence="1">
    <location>
        <position position="90"/>
    </location>
    <ligand>
        <name>carboxy-S-adenosyl-L-methionine</name>
        <dbReference type="ChEBI" id="CHEBI:134278"/>
    </ligand>
</feature>
<feature type="binding site" evidence="1">
    <location>
        <position position="104"/>
    </location>
    <ligand>
        <name>carboxy-S-adenosyl-L-methionine</name>
        <dbReference type="ChEBI" id="CHEBI:134278"/>
    </ligand>
</feature>
<feature type="binding site" evidence="1">
    <location>
        <position position="109"/>
    </location>
    <ligand>
        <name>carboxy-S-adenosyl-L-methionine</name>
        <dbReference type="ChEBI" id="CHEBI:134278"/>
    </ligand>
</feature>
<feature type="binding site" evidence="1">
    <location>
        <position position="129"/>
    </location>
    <ligand>
        <name>carboxy-S-adenosyl-L-methionine</name>
        <dbReference type="ChEBI" id="CHEBI:134278"/>
    </ligand>
</feature>
<feature type="binding site" evidence="1">
    <location>
        <begin position="151"/>
        <end position="153"/>
    </location>
    <ligand>
        <name>carboxy-S-adenosyl-L-methionine</name>
        <dbReference type="ChEBI" id="CHEBI:134278"/>
    </ligand>
</feature>
<feature type="binding site" evidence="1">
    <location>
        <begin position="180"/>
        <end position="181"/>
    </location>
    <ligand>
        <name>carboxy-S-adenosyl-L-methionine</name>
        <dbReference type="ChEBI" id="CHEBI:134278"/>
    </ligand>
</feature>
<feature type="binding site" evidence="1">
    <location>
        <position position="195"/>
    </location>
    <ligand>
        <name>carboxy-S-adenosyl-L-methionine</name>
        <dbReference type="ChEBI" id="CHEBI:134278"/>
    </ligand>
</feature>
<feature type="binding site" evidence="1">
    <location>
        <position position="199"/>
    </location>
    <ligand>
        <name>carboxy-S-adenosyl-L-methionine</name>
        <dbReference type="ChEBI" id="CHEBI:134278"/>
    </ligand>
</feature>
<feature type="binding site" evidence="1">
    <location>
        <position position="314"/>
    </location>
    <ligand>
        <name>carboxy-S-adenosyl-L-methionine</name>
        <dbReference type="ChEBI" id="CHEBI:134278"/>
    </ligand>
</feature>
<proteinExistence type="inferred from homology"/>
<organism>
    <name type="scientific">Histophilus somni (strain 129Pt)</name>
    <name type="common">Haemophilus somnus</name>
    <dbReference type="NCBI Taxonomy" id="205914"/>
    <lineage>
        <taxon>Bacteria</taxon>
        <taxon>Pseudomonadati</taxon>
        <taxon>Pseudomonadota</taxon>
        <taxon>Gammaproteobacteria</taxon>
        <taxon>Pasteurellales</taxon>
        <taxon>Pasteurellaceae</taxon>
        <taxon>Histophilus</taxon>
    </lineage>
</organism>
<gene>
    <name evidence="1" type="primary">cmoB</name>
    <name type="ordered locus">HS_0272</name>
</gene>
<dbReference type="EC" id="2.5.1.-" evidence="1"/>
<dbReference type="EMBL" id="CP000436">
    <property type="protein sequence ID" value="ABI24550.1"/>
    <property type="molecule type" value="Genomic_DNA"/>
</dbReference>
<dbReference type="SMR" id="Q0I1M1"/>
<dbReference type="KEGG" id="hso:HS_0272"/>
<dbReference type="eggNOG" id="COG0500">
    <property type="taxonomic scope" value="Bacteria"/>
</dbReference>
<dbReference type="HOGENOM" id="CLU_052665_0_0_6"/>
<dbReference type="GO" id="GO:0008168">
    <property type="term" value="F:methyltransferase activity"/>
    <property type="evidence" value="ECO:0007669"/>
    <property type="project" value="TreeGrafter"/>
</dbReference>
<dbReference type="GO" id="GO:0016765">
    <property type="term" value="F:transferase activity, transferring alkyl or aryl (other than methyl) groups"/>
    <property type="evidence" value="ECO:0007669"/>
    <property type="project" value="UniProtKB-UniRule"/>
</dbReference>
<dbReference type="GO" id="GO:0002098">
    <property type="term" value="P:tRNA wobble uridine modification"/>
    <property type="evidence" value="ECO:0007669"/>
    <property type="project" value="InterPro"/>
</dbReference>
<dbReference type="CDD" id="cd02440">
    <property type="entry name" value="AdoMet_MTases"/>
    <property type="match status" value="1"/>
</dbReference>
<dbReference type="Gene3D" id="3.40.50.150">
    <property type="entry name" value="Vaccinia Virus protein VP39"/>
    <property type="match status" value="1"/>
</dbReference>
<dbReference type="HAMAP" id="MF_01590">
    <property type="entry name" value="tRNA_carboxymethyltr_CmoB"/>
    <property type="match status" value="1"/>
</dbReference>
<dbReference type="InterPro" id="IPR010017">
    <property type="entry name" value="CmoB"/>
</dbReference>
<dbReference type="InterPro" id="IPR027555">
    <property type="entry name" value="Mo5U34_MeTrfas-like"/>
</dbReference>
<dbReference type="InterPro" id="IPR029063">
    <property type="entry name" value="SAM-dependent_MTases_sf"/>
</dbReference>
<dbReference type="NCBIfam" id="NF011650">
    <property type="entry name" value="PRK15068.1"/>
    <property type="match status" value="1"/>
</dbReference>
<dbReference type="NCBIfam" id="TIGR00452">
    <property type="entry name" value="tRNA 5-methoxyuridine(34)/uridine 5-oxyacetic acid(34) synthase CmoB"/>
    <property type="match status" value="1"/>
</dbReference>
<dbReference type="PANTHER" id="PTHR43464">
    <property type="entry name" value="METHYLTRANSFERASE"/>
    <property type="match status" value="1"/>
</dbReference>
<dbReference type="PANTHER" id="PTHR43464:SF95">
    <property type="entry name" value="TRNA U34 CARBOXYMETHYLTRANSFERASE"/>
    <property type="match status" value="1"/>
</dbReference>
<dbReference type="Pfam" id="PF08003">
    <property type="entry name" value="Methyltransf_9"/>
    <property type="match status" value="1"/>
</dbReference>
<dbReference type="SUPFAM" id="SSF53335">
    <property type="entry name" value="S-adenosyl-L-methionine-dependent methyltransferases"/>
    <property type="match status" value="1"/>
</dbReference>
<keyword id="KW-0808">Transferase</keyword>
<keyword id="KW-0819">tRNA processing</keyword>